<evidence type="ECO:0000256" key="1">
    <source>
        <dbReference type="SAM" id="MobiDB-lite"/>
    </source>
</evidence>
<evidence type="ECO:0000269" key="2">
    <source>
    </source>
</evidence>
<evidence type="ECO:0000269" key="3">
    <source>
    </source>
</evidence>
<evidence type="ECO:0000269" key="4">
    <source>
    </source>
</evidence>
<evidence type="ECO:0000305" key="5"/>
<proteinExistence type="evidence at protein level"/>
<name>MFG1_YEAST</name>
<comment type="function">
    <text evidence="4">Transcriptional regulator with a general role in all morphogenetically distinct forms of filamentous growth, namely haploid invasive growth, biofilm formation, and diploid pseudohyphal growth. May control FLO11 gene expression as part of a promoter-bound complex with FLO8 and MSS1.</text>
</comment>
<comment type="subunit">
    <text>Interacts with FLO8 and MSS11, both morphogenetic transcription factors binding directly to the FLO11 promoter.</text>
</comment>
<comment type="subcellular location">
    <subcellularLocation>
        <location evidence="2 4">Nucleus</location>
    </subcellularLocation>
</comment>
<comment type="miscellaneous">
    <text evidence="3">Present with 1010 molecules/cell in log phase SD medium.</text>
</comment>
<comment type="similarity">
    <text evidence="5">Belongs to the MFG1 family.</text>
</comment>
<accession>Q07684</accession>
<accession>D6VRC3</accession>
<protein>
    <recommendedName>
        <fullName>Morphogenetic regulator of filamentous growth protein 1</fullName>
    </recommendedName>
</protein>
<gene>
    <name type="primary">MFG1</name>
    <name type="ordered locus">YDL233W</name>
</gene>
<dbReference type="EMBL" id="Z74281">
    <property type="protein sequence ID" value="CAA98812.1"/>
    <property type="molecule type" value="Genomic_DNA"/>
</dbReference>
<dbReference type="EMBL" id="BK006938">
    <property type="protein sequence ID" value="DAA11633.1"/>
    <property type="molecule type" value="Genomic_DNA"/>
</dbReference>
<dbReference type="PIR" id="S67796">
    <property type="entry name" value="S67796"/>
</dbReference>
<dbReference type="RefSeq" id="NP_010048.1">
    <property type="nucleotide sequence ID" value="NM_001180293.1"/>
</dbReference>
<dbReference type="SMR" id="Q07684"/>
<dbReference type="BioGRID" id="31878">
    <property type="interactions" value="93"/>
</dbReference>
<dbReference type="DIP" id="DIP-4624N"/>
<dbReference type="FunCoup" id="Q07684">
    <property type="interactions" value="26"/>
</dbReference>
<dbReference type="IntAct" id="Q07684">
    <property type="interactions" value="2"/>
</dbReference>
<dbReference type="STRING" id="4932.YDL233W"/>
<dbReference type="iPTMnet" id="Q07684"/>
<dbReference type="PaxDb" id="4932-YDL233W"/>
<dbReference type="PeptideAtlas" id="Q07684"/>
<dbReference type="EnsemblFungi" id="YDL233W_mRNA">
    <property type="protein sequence ID" value="YDL233W"/>
    <property type="gene ID" value="YDL233W"/>
</dbReference>
<dbReference type="GeneID" id="851365"/>
<dbReference type="KEGG" id="sce:YDL233W"/>
<dbReference type="AGR" id="SGD:S000002392"/>
<dbReference type="SGD" id="S000002392">
    <property type="gene designation" value="MFG1"/>
</dbReference>
<dbReference type="VEuPathDB" id="FungiDB:YDL233W"/>
<dbReference type="eggNOG" id="ENOG502QUF6">
    <property type="taxonomic scope" value="Eukaryota"/>
</dbReference>
<dbReference type="HOGENOM" id="CLU_597380_0_0_1"/>
<dbReference type="InParanoid" id="Q07684"/>
<dbReference type="OMA" id="HNSAQNT"/>
<dbReference type="OrthoDB" id="774557at2759"/>
<dbReference type="BioCyc" id="YEAST:G3O-29611-MONOMER"/>
<dbReference type="BioGRID-ORCS" id="851365">
    <property type="hits" value="1 hit in 10 CRISPR screens"/>
</dbReference>
<dbReference type="PRO" id="PR:Q07684"/>
<dbReference type="Proteomes" id="UP000002311">
    <property type="component" value="Chromosome IV"/>
</dbReference>
<dbReference type="RNAct" id="Q07684">
    <property type="molecule type" value="protein"/>
</dbReference>
<dbReference type="GO" id="GO:0005737">
    <property type="term" value="C:cytoplasm"/>
    <property type="evidence" value="ECO:0007005"/>
    <property type="project" value="SGD"/>
</dbReference>
<dbReference type="GO" id="GO:0005634">
    <property type="term" value="C:nucleus"/>
    <property type="evidence" value="ECO:0007005"/>
    <property type="project" value="SGD"/>
</dbReference>
<dbReference type="GO" id="GO:0005667">
    <property type="term" value="C:transcription regulator complex"/>
    <property type="evidence" value="ECO:0000318"/>
    <property type="project" value="GO_Central"/>
</dbReference>
<dbReference type="GO" id="GO:0003712">
    <property type="term" value="F:transcription coregulator activity"/>
    <property type="evidence" value="ECO:0000318"/>
    <property type="project" value="GO_Central"/>
</dbReference>
<dbReference type="GO" id="GO:0000122">
    <property type="term" value="P:negative regulation of transcription by RNA polymerase II"/>
    <property type="evidence" value="ECO:0000318"/>
    <property type="project" value="GO_Central"/>
</dbReference>
<dbReference type="GO" id="GO:0045944">
    <property type="term" value="P:positive regulation of transcription by RNA polymerase II"/>
    <property type="evidence" value="ECO:0000318"/>
    <property type="project" value="GO_Central"/>
</dbReference>
<dbReference type="InterPro" id="IPR029005">
    <property type="entry name" value="LIM-bd/SEUSS"/>
</dbReference>
<dbReference type="PANTHER" id="PTHR10378">
    <property type="entry name" value="LIM DOMAIN-BINDING PROTEIN"/>
    <property type="match status" value="1"/>
</dbReference>
<dbReference type="Pfam" id="PF01803">
    <property type="entry name" value="LIM_bind"/>
    <property type="match status" value="1"/>
</dbReference>
<organism>
    <name type="scientific">Saccharomyces cerevisiae (strain ATCC 204508 / S288c)</name>
    <name type="common">Baker's yeast</name>
    <dbReference type="NCBI Taxonomy" id="559292"/>
    <lineage>
        <taxon>Eukaryota</taxon>
        <taxon>Fungi</taxon>
        <taxon>Dikarya</taxon>
        <taxon>Ascomycota</taxon>
        <taxon>Saccharomycotina</taxon>
        <taxon>Saccharomycetes</taxon>
        <taxon>Saccharomycetales</taxon>
        <taxon>Saccharomycetaceae</taxon>
        <taxon>Saccharomyces</taxon>
    </lineage>
</organism>
<feature type="chain" id="PRO_0000242483" description="Morphogenetic regulator of filamentous growth protein 1">
    <location>
        <begin position="1"/>
        <end position="458"/>
    </location>
</feature>
<feature type="region of interest" description="Disordered" evidence="1">
    <location>
        <begin position="401"/>
        <end position="458"/>
    </location>
</feature>
<feature type="compositionally biased region" description="Polar residues" evidence="1">
    <location>
        <begin position="417"/>
        <end position="445"/>
    </location>
</feature>
<feature type="compositionally biased region" description="Basic and acidic residues" evidence="1">
    <location>
        <begin position="446"/>
        <end position="458"/>
    </location>
</feature>
<sequence>MYQGPPQPPPQAVPMPYIVNNNTPPYPNGNINFPPTAQQNIPPTVYPQQVPFPGQPQGGQFPQPSSEQQVFNQLPQVTQTFHNSAQNTNATGGPGSGSMPMFTPVASFPHPMATAATAAAPLPRSASQASLSMLRVPYHVRKYLSNLAMLKLYEIINEVNTAMGKIGLLSFWTELISDIFTPDAVIRYSKKSMTDYREFEFIIPVFPVICSTLGRFGIVRMEVKVLQLKTQVLSNSTIFFNCPRVTFVYYYPDGSYITHFSQMKGAFDLDLKINWLDVSMHSFVPDIEWNAVERLLSDDTKSTEIEQIFRKLKQEDVKEQGNSFAENNATNVPPNFEAITQLRSYFDVFRNVSVFGTQEGLMRVMQISTVMSTLKNLRKFQIEKNIDSPVTALSAYIDADKKDSGSEPLHAKRRRNSGISPRTTTLGPNGNSNTSNEELPTSDVNDINKDMTKKKMKF</sequence>
<keyword id="KW-0539">Nucleus</keyword>
<keyword id="KW-1185">Reference proteome</keyword>
<keyword id="KW-0804">Transcription</keyword>
<keyword id="KW-0805">Transcription regulation</keyword>
<reference key="1">
    <citation type="journal article" date="1997" name="Nature">
        <title>The nucleotide sequence of Saccharomyces cerevisiae chromosome IV.</title>
        <authorList>
            <person name="Jacq C."/>
            <person name="Alt-Moerbe J."/>
            <person name="Andre B."/>
            <person name="Arnold W."/>
            <person name="Bahr A."/>
            <person name="Ballesta J.P.G."/>
            <person name="Bargues M."/>
            <person name="Baron L."/>
            <person name="Becker A."/>
            <person name="Biteau N."/>
            <person name="Bloecker H."/>
            <person name="Blugeon C."/>
            <person name="Boskovic J."/>
            <person name="Brandt P."/>
            <person name="Brueckner M."/>
            <person name="Buitrago M.J."/>
            <person name="Coster F."/>
            <person name="Delaveau T."/>
            <person name="del Rey F."/>
            <person name="Dujon B."/>
            <person name="Eide L.G."/>
            <person name="Garcia-Cantalejo J.M."/>
            <person name="Goffeau A."/>
            <person name="Gomez-Peris A."/>
            <person name="Granotier C."/>
            <person name="Hanemann V."/>
            <person name="Hankeln T."/>
            <person name="Hoheisel J.D."/>
            <person name="Jaeger W."/>
            <person name="Jimenez A."/>
            <person name="Jonniaux J.-L."/>
            <person name="Kraemer C."/>
            <person name="Kuester H."/>
            <person name="Laamanen P."/>
            <person name="Legros Y."/>
            <person name="Louis E.J."/>
            <person name="Moeller-Rieker S."/>
            <person name="Monnet A."/>
            <person name="Moro M."/>
            <person name="Mueller-Auer S."/>
            <person name="Nussbaumer B."/>
            <person name="Paricio N."/>
            <person name="Paulin L."/>
            <person name="Perea J."/>
            <person name="Perez-Alonso M."/>
            <person name="Perez-Ortin J.E."/>
            <person name="Pohl T.M."/>
            <person name="Prydz H."/>
            <person name="Purnelle B."/>
            <person name="Rasmussen S.W."/>
            <person name="Remacha M.A."/>
            <person name="Revuelta J.L."/>
            <person name="Rieger M."/>
            <person name="Salom D."/>
            <person name="Saluz H.P."/>
            <person name="Saiz J.E."/>
            <person name="Saren A.-M."/>
            <person name="Schaefer M."/>
            <person name="Scharfe M."/>
            <person name="Schmidt E.R."/>
            <person name="Schneider C."/>
            <person name="Scholler P."/>
            <person name="Schwarz S."/>
            <person name="Soler-Mira A."/>
            <person name="Urrestarazu L.A."/>
            <person name="Verhasselt P."/>
            <person name="Vissers S."/>
            <person name="Voet M."/>
            <person name="Volckaert G."/>
            <person name="Wagner G."/>
            <person name="Wambutt R."/>
            <person name="Wedler E."/>
            <person name="Wedler H."/>
            <person name="Woelfl S."/>
            <person name="Harris D.E."/>
            <person name="Bowman S."/>
            <person name="Brown D."/>
            <person name="Churcher C.M."/>
            <person name="Connor R."/>
            <person name="Dedman K."/>
            <person name="Gentles S."/>
            <person name="Hamlin N."/>
            <person name="Hunt S."/>
            <person name="Jones L."/>
            <person name="McDonald S."/>
            <person name="Murphy L.D."/>
            <person name="Niblett D."/>
            <person name="Odell C."/>
            <person name="Oliver K."/>
            <person name="Rajandream M.A."/>
            <person name="Richards C."/>
            <person name="Shore L."/>
            <person name="Walsh S.V."/>
            <person name="Barrell B.G."/>
            <person name="Dietrich F.S."/>
            <person name="Mulligan J.T."/>
            <person name="Allen E."/>
            <person name="Araujo R."/>
            <person name="Aviles E."/>
            <person name="Berno A."/>
            <person name="Carpenter J."/>
            <person name="Chen E."/>
            <person name="Cherry J.M."/>
            <person name="Chung E."/>
            <person name="Duncan M."/>
            <person name="Hunicke-Smith S."/>
            <person name="Hyman R.W."/>
            <person name="Komp C."/>
            <person name="Lashkari D."/>
            <person name="Lew H."/>
            <person name="Lin D."/>
            <person name="Mosedale D."/>
            <person name="Nakahara K."/>
            <person name="Namath A."/>
            <person name="Oefner P."/>
            <person name="Oh C."/>
            <person name="Petel F.X."/>
            <person name="Roberts D."/>
            <person name="Schramm S."/>
            <person name="Schroeder M."/>
            <person name="Shogren T."/>
            <person name="Shroff N."/>
            <person name="Winant A."/>
            <person name="Yelton M.A."/>
            <person name="Botstein D."/>
            <person name="Davis R.W."/>
            <person name="Johnston M."/>
            <person name="Andrews S."/>
            <person name="Brinkman R."/>
            <person name="Cooper J."/>
            <person name="Ding H."/>
            <person name="Du Z."/>
            <person name="Favello A."/>
            <person name="Fulton L."/>
            <person name="Gattung S."/>
            <person name="Greco T."/>
            <person name="Hallsworth K."/>
            <person name="Hawkins J."/>
            <person name="Hillier L.W."/>
            <person name="Jier M."/>
            <person name="Johnson D."/>
            <person name="Johnston L."/>
            <person name="Kirsten J."/>
            <person name="Kucaba T."/>
            <person name="Langston Y."/>
            <person name="Latreille P."/>
            <person name="Le T."/>
            <person name="Mardis E."/>
            <person name="Menezes S."/>
            <person name="Miller N."/>
            <person name="Nhan M."/>
            <person name="Pauley A."/>
            <person name="Peluso D."/>
            <person name="Rifkin L."/>
            <person name="Riles L."/>
            <person name="Taich A."/>
            <person name="Trevaskis E."/>
            <person name="Vignati D."/>
            <person name="Wilcox L."/>
            <person name="Wohldman P."/>
            <person name="Vaudin M."/>
            <person name="Wilson R."/>
            <person name="Waterston R."/>
            <person name="Albermann K."/>
            <person name="Hani J."/>
            <person name="Heumann K."/>
            <person name="Kleine K."/>
            <person name="Mewes H.-W."/>
            <person name="Zollner A."/>
            <person name="Zaccaria P."/>
        </authorList>
    </citation>
    <scope>NUCLEOTIDE SEQUENCE [LARGE SCALE GENOMIC DNA]</scope>
    <source>
        <strain>ATCC 204508 / S288c</strain>
    </source>
</reference>
<reference key="2">
    <citation type="journal article" date="2014" name="G3 (Bethesda)">
        <title>The reference genome sequence of Saccharomyces cerevisiae: Then and now.</title>
        <authorList>
            <person name="Engel S.R."/>
            <person name="Dietrich F.S."/>
            <person name="Fisk D.G."/>
            <person name="Binkley G."/>
            <person name="Balakrishnan R."/>
            <person name="Costanzo M.C."/>
            <person name="Dwight S.S."/>
            <person name="Hitz B.C."/>
            <person name="Karra K."/>
            <person name="Nash R.S."/>
            <person name="Weng S."/>
            <person name="Wong E.D."/>
            <person name="Lloyd P."/>
            <person name="Skrzypek M.S."/>
            <person name="Miyasato S.R."/>
            <person name="Simison M."/>
            <person name="Cherry J.M."/>
        </authorList>
    </citation>
    <scope>GENOME REANNOTATION</scope>
    <source>
        <strain>ATCC 204508 / S288c</strain>
    </source>
</reference>
<reference key="3">
    <citation type="journal article" date="2003" name="Nature">
        <title>Global analysis of protein localization in budding yeast.</title>
        <authorList>
            <person name="Huh W.-K."/>
            <person name="Falvo J.V."/>
            <person name="Gerke L.C."/>
            <person name="Carroll A.S."/>
            <person name="Howson R.W."/>
            <person name="Weissman J.S."/>
            <person name="O'Shea E.K."/>
        </authorList>
    </citation>
    <scope>SUBCELLULAR LOCATION [LARGE SCALE ANALYSIS]</scope>
</reference>
<reference key="4">
    <citation type="journal article" date="2003" name="Nature">
        <title>Global analysis of protein expression in yeast.</title>
        <authorList>
            <person name="Ghaemmaghami S."/>
            <person name="Huh W.-K."/>
            <person name="Bower K."/>
            <person name="Howson R.W."/>
            <person name="Belle A."/>
            <person name="Dephoure N."/>
            <person name="O'Shea E.K."/>
            <person name="Weissman J.S."/>
        </authorList>
    </citation>
    <scope>LEVEL OF PROTEIN EXPRESSION [LARGE SCALE ANALYSIS]</scope>
</reference>
<reference key="5">
    <citation type="journal article" date="2008" name="Mol. Cell. Proteomics">
        <title>A multidimensional chromatography technology for in-depth phosphoproteome analysis.</title>
        <authorList>
            <person name="Albuquerque C.P."/>
            <person name="Smolka M.B."/>
            <person name="Payne S.H."/>
            <person name="Bafna V."/>
            <person name="Eng J."/>
            <person name="Zhou H."/>
        </authorList>
    </citation>
    <scope>IDENTIFICATION BY MASS SPECTROMETRY [LARGE SCALE ANALYSIS]</scope>
</reference>
<reference key="6">
    <citation type="journal article" date="2012" name="Science">
        <title>Global gene deletion analysis exploring yeast filamentous growth.</title>
        <authorList>
            <person name="Ryan O."/>
            <person name="Shapiro R.S."/>
            <person name="Kurat C.F."/>
            <person name="Mayhew D."/>
            <person name="Baryshnikova A."/>
            <person name="Chin B."/>
            <person name="Lin Z.Y."/>
            <person name="Cox M.J."/>
            <person name="Vizeacoumar F."/>
            <person name="Cheung D."/>
            <person name="Bahr S."/>
            <person name="Tsui K."/>
            <person name="Tebbji F."/>
            <person name="Sellam A."/>
            <person name="Istel F."/>
            <person name="Schwarzmuller T."/>
            <person name="Reynolds T.B."/>
            <person name="Kuchler K."/>
            <person name="Gifford D.K."/>
            <person name="Whiteway M."/>
            <person name="Giaever G."/>
            <person name="Nislow C."/>
            <person name="Costanzo M."/>
            <person name="Gingras A.C."/>
            <person name="Mitra R.D."/>
            <person name="Andrews B."/>
            <person name="Fink G.R."/>
            <person name="Cowen L.E."/>
            <person name="Boone C."/>
        </authorList>
    </citation>
    <scope>FUNCTION</scope>
    <scope>SUBCELLULAR LOCATION</scope>
    <source>
        <strain>Sigma 1278B</strain>
    </source>
</reference>